<gene>
    <name evidence="1" type="primary">gatC</name>
    <name type="ordered locus">Swit_0599</name>
</gene>
<name>GATC_RHIWR</name>
<organism>
    <name type="scientific">Rhizorhabdus wittichii (strain DSM 6014 / CCUG 31198 / JCM 15750 / NBRC 105917 / EY 4224 / RW1)</name>
    <name type="common">Sphingomonas wittichii</name>
    <dbReference type="NCBI Taxonomy" id="392499"/>
    <lineage>
        <taxon>Bacteria</taxon>
        <taxon>Pseudomonadati</taxon>
        <taxon>Pseudomonadota</taxon>
        <taxon>Alphaproteobacteria</taxon>
        <taxon>Sphingomonadales</taxon>
        <taxon>Sphingomonadaceae</taxon>
        <taxon>Rhizorhabdus</taxon>
    </lineage>
</organism>
<dbReference type="EC" id="6.3.5.-" evidence="1"/>
<dbReference type="EMBL" id="CP000699">
    <property type="protein sequence ID" value="ABQ66967.1"/>
    <property type="molecule type" value="Genomic_DNA"/>
</dbReference>
<dbReference type="SMR" id="A5V3V1"/>
<dbReference type="STRING" id="392499.Swit_0599"/>
<dbReference type="PaxDb" id="392499-Swit_0599"/>
<dbReference type="KEGG" id="swi:Swit_0599"/>
<dbReference type="eggNOG" id="COG0721">
    <property type="taxonomic scope" value="Bacteria"/>
</dbReference>
<dbReference type="HOGENOM" id="CLU_105899_2_0_5"/>
<dbReference type="OrthoDB" id="9794326at2"/>
<dbReference type="Proteomes" id="UP000001989">
    <property type="component" value="Chromosome"/>
</dbReference>
<dbReference type="GO" id="GO:0050566">
    <property type="term" value="F:asparaginyl-tRNA synthase (glutamine-hydrolyzing) activity"/>
    <property type="evidence" value="ECO:0007669"/>
    <property type="project" value="RHEA"/>
</dbReference>
<dbReference type="GO" id="GO:0005524">
    <property type="term" value="F:ATP binding"/>
    <property type="evidence" value="ECO:0007669"/>
    <property type="project" value="UniProtKB-KW"/>
</dbReference>
<dbReference type="GO" id="GO:0050567">
    <property type="term" value="F:glutaminyl-tRNA synthase (glutamine-hydrolyzing) activity"/>
    <property type="evidence" value="ECO:0007669"/>
    <property type="project" value="UniProtKB-UniRule"/>
</dbReference>
<dbReference type="GO" id="GO:0070681">
    <property type="term" value="P:glutaminyl-tRNAGln biosynthesis via transamidation"/>
    <property type="evidence" value="ECO:0007669"/>
    <property type="project" value="TreeGrafter"/>
</dbReference>
<dbReference type="GO" id="GO:0006450">
    <property type="term" value="P:regulation of translational fidelity"/>
    <property type="evidence" value="ECO:0007669"/>
    <property type="project" value="InterPro"/>
</dbReference>
<dbReference type="GO" id="GO:0006412">
    <property type="term" value="P:translation"/>
    <property type="evidence" value="ECO:0007669"/>
    <property type="project" value="UniProtKB-UniRule"/>
</dbReference>
<dbReference type="Gene3D" id="1.10.20.60">
    <property type="entry name" value="Glu-tRNAGln amidotransferase C subunit, N-terminal domain"/>
    <property type="match status" value="1"/>
</dbReference>
<dbReference type="HAMAP" id="MF_00122">
    <property type="entry name" value="GatC"/>
    <property type="match status" value="1"/>
</dbReference>
<dbReference type="InterPro" id="IPR036113">
    <property type="entry name" value="Asp/Glu-ADT_sf_sub_c"/>
</dbReference>
<dbReference type="InterPro" id="IPR003837">
    <property type="entry name" value="GatC"/>
</dbReference>
<dbReference type="NCBIfam" id="TIGR00135">
    <property type="entry name" value="gatC"/>
    <property type="match status" value="1"/>
</dbReference>
<dbReference type="PANTHER" id="PTHR15004">
    <property type="entry name" value="GLUTAMYL-TRNA(GLN) AMIDOTRANSFERASE SUBUNIT C, MITOCHONDRIAL"/>
    <property type="match status" value="1"/>
</dbReference>
<dbReference type="PANTHER" id="PTHR15004:SF0">
    <property type="entry name" value="GLUTAMYL-TRNA(GLN) AMIDOTRANSFERASE SUBUNIT C, MITOCHONDRIAL"/>
    <property type="match status" value="1"/>
</dbReference>
<dbReference type="Pfam" id="PF02686">
    <property type="entry name" value="GatC"/>
    <property type="match status" value="1"/>
</dbReference>
<dbReference type="SUPFAM" id="SSF141000">
    <property type="entry name" value="Glu-tRNAGln amidotransferase C subunit"/>
    <property type="match status" value="1"/>
</dbReference>
<evidence type="ECO:0000255" key="1">
    <source>
        <dbReference type="HAMAP-Rule" id="MF_00122"/>
    </source>
</evidence>
<comment type="function">
    <text evidence="1">Allows the formation of correctly charged Asn-tRNA(Asn) or Gln-tRNA(Gln) through the transamidation of misacylated Asp-tRNA(Asn) or Glu-tRNA(Gln) in organisms which lack either or both of asparaginyl-tRNA or glutaminyl-tRNA synthetases. The reaction takes place in the presence of glutamine and ATP through an activated phospho-Asp-tRNA(Asn) or phospho-Glu-tRNA(Gln).</text>
</comment>
<comment type="catalytic activity">
    <reaction evidence="1">
        <text>L-glutamyl-tRNA(Gln) + L-glutamine + ATP + H2O = L-glutaminyl-tRNA(Gln) + L-glutamate + ADP + phosphate + H(+)</text>
        <dbReference type="Rhea" id="RHEA:17521"/>
        <dbReference type="Rhea" id="RHEA-COMP:9681"/>
        <dbReference type="Rhea" id="RHEA-COMP:9684"/>
        <dbReference type="ChEBI" id="CHEBI:15377"/>
        <dbReference type="ChEBI" id="CHEBI:15378"/>
        <dbReference type="ChEBI" id="CHEBI:29985"/>
        <dbReference type="ChEBI" id="CHEBI:30616"/>
        <dbReference type="ChEBI" id="CHEBI:43474"/>
        <dbReference type="ChEBI" id="CHEBI:58359"/>
        <dbReference type="ChEBI" id="CHEBI:78520"/>
        <dbReference type="ChEBI" id="CHEBI:78521"/>
        <dbReference type="ChEBI" id="CHEBI:456216"/>
    </reaction>
</comment>
<comment type="catalytic activity">
    <reaction evidence="1">
        <text>L-aspartyl-tRNA(Asn) + L-glutamine + ATP + H2O = L-asparaginyl-tRNA(Asn) + L-glutamate + ADP + phosphate + 2 H(+)</text>
        <dbReference type="Rhea" id="RHEA:14513"/>
        <dbReference type="Rhea" id="RHEA-COMP:9674"/>
        <dbReference type="Rhea" id="RHEA-COMP:9677"/>
        <dbReference type="ChEBI" id="CHEBI:15377"/>
        <dbReference type="ChEBI" id="CHEBI:15378"/>
        <dbReference type="ChEBI" id="CHEBI:29985"/>
        <dbReference type="ChEBI" id="CHEBI:30616"/>
        <dbReference type="ChEBI" id="CHEBI:43474"/>
        <dbReference type="ChEBI" id="CHEBI:58359"/>
        <dbReference type="ChEBI" id="CHEBI:78515"/>
        <dbReference type="ChEBI" id="CHEBI:78516"/>
        <dbReference type="ChEBI" id="CHEBI:456216"/>
    </reaction>
</comment>
<comment type="subunit">
    <text evidence="1">Heterotrimer of A, B and C subunits.</text>
</comment>
<comment type="similarity">
    <text evidence="1">Belongs to the GatC family.</text>
</comment>
<keyword id="KW-0067">ATP-binding</keyword>
<keyword id="KW-0436">Ligase</keyword>
<keyword id="KW-0547">Nucleotide-binding</keyword>
<keyword id="KW-0648">Protein biosynthesis</keyword>
<keyword id="KW-1185">Reference proteome</keyword>
<reference key="1">
    <citation type="journal article" date="2010" name="J. Bacteriol.">
        <title>Genome sequence of the dioxin-mineralizing bacterium Sphingomonas wittichii RW1.</title>
        <authorList>
            <person name="Miller T.R."/>
            <person name="Delcher A.L."/>
            <person name="Salzberg S.L."/>
            <person name="Saunders E."/>
            <person name="Detter J.C."/>
            <person name="Halden R.U."/>
        </authorList>
    </citation>
    <scope>NUCLEOTIDE SEQUENCE [LARGE SCALE GENOMIC DNA]</scope>
    <source>
        <strain>DSM 6014 / CCUG 31198 / JCM 15750 / NBRC 105917 / EY 4224 / RW1</strain>
    </source>
</reference>
<sequence length="95" mass="10170">MSVDAATVRKIASLARIAVTDGDVEAMVPELNNILGWIEQLGEVDTDGVAPLAAVIPNHQRLRDDVVTDGNIRDKVLANAPQAEHGFFAVPKVIE</sequence>
<proteinExistence type="inferred from homology"/>
<feature type="chain" id="PRO_1000016213" description="Aspartyl/glutamyl-tRNA(Asn/Gln) amidotransferase subunit C">
    <location>
        <begin position="1"/>
        <end position="95"/>
    </location>
</feature>
<protein>
    <recommendedName>
        <fullName evidence="1">Aspartyl/glutamyl-tRNA(Asn/Gln) amidotransferase subunit C</fullName>
        <shortName evidence="1">Asp/Glu-ADT subunit C</shortName>
        <ecNumber evidence="1">6.3.5.-</ecNumber>
    </recommendedName>
</protein>
<accession>A5V3V1</accession>